<keyword id="KW-0687">Ribonucleoprotein</keyword>
<keyword id="KW-0689">Ribosomal protein</keyword>
<keyword id="KW-0694">RNA-binding</keyword>
<keyword id="KW-0699">rRNA-binding</keyword>
<feature type="chain" id="PRO_1000005579" description="Large ribosomal subunit protein uL10">
    <location>
        <begin position="1"/>
        <end position="169"/>
    </location>
</feature>
<evidence type="ECO:0000255" key="1">
    <source>
        <dbReference type="HAMAP-Rule" id="MF_00362"/>
    </source>
</evidence>
<evidence type="ECO:0000305" key="2"/>
<proteinExistence type="inferred from homology"/>
<sequence>MLRSEKPEVVEEIASIYKDSPSVIVAHYHGLTVSEVNSLRESLKSKDAGFKVVKNTLAKIAANKAGLDDIVSLFSGPTAIVYSKEPVEMAKLVVNFAKSNENLKIVGGIVDKQVLNEHSIKELSKLPSLNELRSKIVGLLQAPATKIAGVLQAPSSSLARVIQANASKN</sequence>
<gene>
    <name evidence="1" type="primary">rplJ</name>
    <name type="ordered locus">A1I_01505</name>
</gene>
<reference key="1">
    <citation type="submission" date="2007-09" db="EMBL/GenBank/DDBJ databases">
        <title>Complete genome sequencing of Rickettsia bellii.</title>
        <authorList>
            <person name="Madan A."/>
            <person name="Lee H."/>
            <person name="Madan A."/>
            <person name="Yoon J.-G."/>
            <person name="Ryu G.-Y."/>
            <person name="Dasch G."/>
            <person name="Ereemeva M."/>
        </authorList>
    </citation>
    <scope>NUCLEOTIDE SEQUENCE [LARGE SCALE GENOMIC DNA]</scope>
    <source>
        <strain>OSU 85-389</strain>
    </source>
</reference>
<organism>
    <name type="scientific">Rickettsia bellii (strain OSU 85-389)</name>
    <dbReference type="NCBI Taxonomy" id="391896"/>
    <lineage>
        <taxon>Bacteria</taxon>
        <taxon>Pseudomonadati</taxon>
        <taxon>Pseudomonadota</taxon>
        <taxon>Alphaproteobacteria</taxon>
        <taxon>Rickettsiales</taxon>
        <taxon>Rickettsiaceae</taxon>
        <taxon>Rickettsieae</taxon>
        <taxon>Rickettsia</taxon>
        <taxon>belli group</taxon>
    </lineage>
</organism>
<comment type="function">
    <text evidence="1">Forms part of the ribosomal stalk, playing a central role in the interaction of the ribosome with GTP-bound translation factors.</text>
</comment>
<comment type="subunit">
    <text evidence="1">Part of the ribosomal stalk of the 50S ribosomal subunit. The N-terminus interacts with L11 and the large rRNA to form the base of the stalk. The C-terminus forms an elongated spine to which L12 dimers bind in a sequential fashion forming a multimeric L10(L12)X complex.</text>
</comment>
<comment type="similarity">
    <text evidence="1">Belongs to the universal ribosomal protein uL10 family.</text>
</comment>
<protein>
    <recommendedName>
        <fullName evidence="1">Large ribosomal subunit protein uL10</fullName>
    </recommendedName>
    <alternativeName>
        <fullName evidence="2">50S ribosomal protein L10</fullName>
    </alternativeName>
</protein>
<name>RL10_RICB8</name>
<accession>A8GV22</accession>
<dbReference type="EMBL" id="CP000849">
    <property type="protein sequence ID" value="ABV78693.1"/>
    <property type="molecule type" value="Genomic_DNA"/>
</dbReference>
<dbReference type="RefSeq" id="WP_011477814.1">
    <property type="nucleotide sequence ID" value="NC_009883.1"/>
</dbReference>
<dbReference type="SMR" id="A8GV22"/>
<dbReference type="KEGG" id="rbo:A1I_01505"/>
<dbReference type="HOGENOM" id="CLU_092227_0_0_5"/>
<dbReference type="GO" id="GO:0015934">
    <property type="term" value="C:large ribosomal subunit"/>
    <property type="evidence" value="ECO:0007669"/>
    <property type="project" value="InterPro"/>
</dbReference>
<dbReference type="GO" id="GO:0070180">
    <property type="term" value="F:large ribosomal subunit rRNA binding"/>
    <property type="evidence" value="ECO:0007669"/>
    <property type="project" value="UniProtKB-UniRule"/>
</dbReference>
<dbReference type="GO" id="GO:0003735">
    <property type="term" value="F:structural constituent of ribosome"/>
    <property type="evidence" value="ECO:0007669"/>
    <property type="project" value="InterPro"/>
</dbReference>
<dbReference type="GO" id="GO:0006412">
    <property type="term" value="P:translation"/>
    <property type="evidence" value="ECO:0007669"/>
    <property type="project" value="UniProtKB-UniRule"/>
</dbReference>
<dbReference type="CDD" id="cd05797">
    <property type="entry name" value="Ribosomal_L10"/>
    <property type="match status" value="1"/>
</dbReference>
<dbReference type="Gene3D" id="3.30.70.1730">
    <property type="match status" value="1"/>
</dbReference>
<dbReference type="Gene3D" id="6.10.250.290">
    <property type="match status" value="1"/>
</dbReference>
<dbReference type="HAMAP" id="MF_00362">
    <property type="entry name" value="Ribosomal_uL10"/>
    <property type="match status" value="1"/>
</dbReference>
<dbReference type="InterPro" id="IPR001790">
    <property type="entry name" value="Ribosomal_uL10"/>
</dbReference>
<dbReference type="InterPro" id="IPR043141">
    <property type="entry name" value="Ribosomal_uL10-like_sf"/>
</dbReference>
<dbReference type="InterPro" id="IPR022973">
    <property type="entry name" value="Ribosomal_uL10_bac"/>
</dbReference>
<dbReference type="InterPro" id="IPR047865">
    <property type="entry name" value="Ribosomal_uL10_bac_type"/>
</dbReference>
<dbReference type="InterPro" id="IPR002363">
    <property type="entry name" value="Ribosomal_uL10_CS_bac"/>
</dbReference>
<dbReference type="NCBIfam" id="NF000955">
    <property type="entry name" value="PRK00099.1-1"/>
    <property type="match status" value="1"/>
</dbReference>
<dbReference type="PANTHER" id="PTHR11560">
    <property type="entry name" value="39S RIBOSOMAL PROTEIN L10, MITOCHONDRIAL"/>
    <property type="match status" value="1"/>
</dbReference>
<dbReference type="Pfam" id="PF00466">
    <property type="entry name" value="Ribosomal_L10"/>
    <property type="match status" value="1"/>
</dbReference>
<dbReference type="SUPFAM" id="SSF160369">
    <property type="entry name" value="Ribosomal protein L10-like"/>
    <property type="match status" value="1"/>
</dbReference>
<dbReference type="PROSITE" id="PS01109">
    <property type="entry name" value="RIBOSOMAL_L10"/>
    <property type="match status" value="1"/>
</dbReference>